<reference key="1">
    <citation type="submission" date="2006-03" db="EMBL/GenBank/DDBJ databases">
        <title>Complete sequence of Rhodopseudomonas palustris BisB5.</title>
        <authorList>
            <consortium name="US DOE Joint Genome Institute"/>
            <person name="Copeland A."/>
            <person name="Lucas S."/>
            <person name="Lapidus A."/>
            <person name="Barry K."/>
            <person name="Detter J.C."/>
            <person name="Glavina del Rio T."/>
            <person name="Hammon N."/>
            <person name="Israni S."/>
            <person name="Dalin E."/>
            <person name="Tice H."/>
            <person name="Pitluck S."/>
            <person name="Chain P."/>
            <person name="Malfatti S."/>
            <person name="Shin M."/>
            <person name="Vergez L."/>
            <person name="Schmutz J."/>
            <person name="Larimer F."/>
            <person name="Land M."/>
            <person name="Hauser L."/>
            <person name="Pelletier D.A."/>
            <person name="Kyrpides N."/>
            <person name="Lykidis A."/>
            <person name="Oda Y."/>
            <person name="Harwood C.S."/>
            <person name="Richardson P."/>
        </authorList>
    </citation>
    <scope>NUCLEOTIDE SEQUENCE [LARGE SCALE GENOMIC DNA]</scope>
    <source>
        <strain>BisB5</strain>
    </source>
</reference>
<feature type="chain" id="PRO_1000013913" description="Ubiquinone biosynthesis O-methyltransferase">
    <location>
        <begin position="1"/>
        <end position="253"/>
    </location>
</feature>
<feature type="binding site" evidence="1">
    <location>
        <position position="47"/>
    </location>
    <ligand>
        <name>S-adenosyl-L-methionine</name>
        <dbReference type="ChEBI" id="CHEBI:59789"/>
    </ligand>
</feature>
<feature type="binding site" evidence="1">
    <location>
        <position position="78"/>
    </location>
    <ligand>
        <name>S-adenosyl-L-methionine</name>
        <dbReference type="ChEBI" id="CHEBI:59789"/>
    </ligand>
</feature>
<feature type="binding site" evidence="1">
    <location>
        <position position="99"/>
    </location>
    <ligand>
        <name>S-adenosyl-L-methionine</name>
        <dbReference type="ChEBI" id="CHEBI:59789"/>
    </ligand>
</feature>
<feature type="binding site" evidence="1">
    <location>
        <position position="141"/>
    </location>
    <ligand>
        <name>S-adenosyl-L-methionine</name>
        <dbReference type="ChEBI" id="CHEBI:59789"/>
    </ligand>
</feature>
<evidence type="ECO:0000255" key="1">
    <source>
        <dbReference type="HAMAP-Rule" id="MF_00472"/>
    </source>
</evidence>
<comment type="function">
    <text evidence="1">O-methyltransferase that catalyzes the 2 O-methylation steps in the ubiquinone biosynthetic pathway.</text>
</comment>
<comment type="catalytic activity">
    <reaction evidence="1">
        <text>a 3-demethylubiquinol + S-adenosyl-L-methionine = a ubiquinol + S-adenosyl-L-homocysteine + H(+)</text>
        <dbReference type="Rhea" id="RHEA:44380"/>
        <dbReference type="Rhea" id="RHEA-COMP:9566"/>
        <dbReference type="Rhea" id="RHEA-COMP:10914"/>
        <dbReference type="ChEBI" id="CHEBI:15378"/>
        <dbReference type="ChEBI" id="CHEBI:17976"/>
        <dbReference type="ChEBI" id="CHEBI:57856"/>
        <dbReference type="ChEBI" id="CHEBI:59789"/>
        <dbReference type="ChEBI" id="CHEBI:84422"/>
        <dbReference type="EC" id="2.1.1.64"/>
    </reaction>
</comment>
<comment type="catalytic activity">
    <reaction evidence="1">
        <text>a 3-(all-trans-polyprenyl)benzene-1,2-diol + S-adenosyl-L-methionine = a 2-methoxy-6-(all-trans-polyprenyl)phenol + S-adenosyl-L-homocysteine + H(+)</text>
        <dbReference type="Rhea" id="RHEA:31411"/>
        <dbReference type="Rhea" id="RHEA-COMP:9550"/>
        <dbReference type="Rhea" id="RHEA-COMP:9551"/>
        <dbReference type="ChEBI" id="CHEBI:15378"/>
        <dbReference type="ChEBI" id="CHEBI:57856"/>
        <dbReference type="ChEBI" id="CHEBI:59789"/>
        <dbReference type="ChEBI" id="CHEBI:62729"/>
        <dbReference type="ChEBI" id="CHEBI:62731"/>
        <dbReference type="EC" id="2.1.1.222"/>
    </reaction>
</comment>
<comment type="pathway">
    <text evidence="1">Cofactor biosynthesis; ubiquinone biosynthesis.</text>
</comment>
<comment type="similarity">
    <text evidence="1">Belongs to the methyltransferase superfamily. UbiG/COQ3 family.</text>
</comment>
<protein>
    <recommendedName>
        <fullName evidence="1">Ubiquinone biosynthesis O-methyltransferase</fullName>
    </recommendedName>
    <alternativeName>
        <fullName evidence="1">2-polyprenyl-6-hydroxyphenol methylase</fullName>
        <ecNumber evidence="1">2.1.1.222</ecNumber>
    </alternativeName>
    <alternativeName>
        <fullName evidence="1">3-demethylubiquinone 3-O-methyltransferase</fullName>
        <ecNumber evidence="1">2.1.1.64</ecNumber>
    </alternativeName>
</protein>
<name>UBIG_RHOPS</name>
<accession>Q13EZ9</accession>
<keyword id="KW-0489">Methyltransferase</keyword>
<keyword id="KW-0949">S-adenosyl-L-methionine</keyword>
<keyword id="KW-0808">Transferase</keyword>
<keyword id="KW-0831">Ubiquinone biosynthesis</keyword>
<dbReference type="EC" id="2.1.1.222" evidence="1"/>
<dbReference type="EC" id="2.1.1.64" evidence="1"/>
<dbReference type="EMBL" id="CP000283">
    <property type="protein sequence ID" value="ABE37340.1"/>
    <property type="molecule type" value="Genomic_DNA"/>
</dbReference>
<dbReference type="SMR" id="Q13EZ9"/>
<dbReference type="STRING" id="316057.RPD_0100"/>
<dbReference type="KEGG" id="rpd:RPD_0100"/>
<dbReference type="eggNOG" id="COG2227">
    <property type="taxonomic scope" value="Bacteria"/>
</dbReference>
<dbReference type="HOGENOM" id="CLU_042432_0_0_5"/>
<dbReference type="BioCyc" id="RPAL316057:RPD_RS00500-MONOMER"/>
<dbReference type="UniPathway" id="UPA00232"/>
<dbReference type="Proteomes" id="UP000001818">
    <property type="component" value="Chromosome"/>
</dbReference>
<dbReference type="GO" id="GO:0102208">
    <property type="term" value="F:2-polyprenyl-6-hydroxyphenol methylase activity"/>
    <property type="evidence" value="ECO:0007669"/>
    <property type="project" value="UniProtKB-EC"/>
</dbReference>
<dbReference type="GO" id="GO:0061542">
    <property type="term" value="F:3-demethylubiquinol 3-O-methyltransferase activity"/>
    <property type="evidence" value="ECO:0007669"/>
    <property type="project" value="UniProtKB-UniRule"/>
</dbReference>
<dbReference type="GO" id="GO:0010420">
    <property type="term" value="F:polyprenyldihydroxybenzoate methyltransferase activity"/>
    <property type="evidence" value="ECO:0007669"/>
    <property type="project" value="InterPro"/>
</dbReference>
<dbReference type="GO" id="GO:0032259">
    <property type="term" value="P:methylation"/>
    <property type="evidence" value="ECO:0007669"/>
    <property type="project" value="UniProtKB-KW"/>
</dbReference>
<dbReference type="CDD" id="cd02440">
    <property type="entry name" value="AdoMet_MTases"/>
    <property type="match status" value="1"/>
</dbReference>
<dbReference type="Gene3D" id="3.40.50.150">
    <property type="entry name" value="Vaccinia Virus protein VP39"/>
    <property type="match status" value="1"/>
</dbReference>
<dbReference type="HAMAP" id="MF_00472">
    <property type="entry name" value="UbiG"/>
    <property type="match status" value="1"/>
</dbReference>
<dbReference type="InterPro" id="IPR029063">
    <property type="entry name" value="SAM-dependent_MTases_sf"/>
</dbReference>
<dbReference type="InterPro" id="IPR010233">
    <property type="entry name" value="UbiG_MeTrfase"/>
</dbReference>
<dbReference type="NCBIfam" id="TIGR01983">
    <property type="entry name" value="UbiG"/>
    <property type="match status" value="1"/>
</dbReference>
<dbReference type="PANTHER" id="PTHR43464">
    <property type="entry name" value="METHYLTRANSFERASE"/>
    <property type="match status" value="1"/>
</dbReference>
<dbReference type="PANTHER" id="PTHR43464:SF19">
    <property type="entry name" value="UBIQUINONE BIOSYNTHESIS O-METHYLTRANSFERASE, MITOCHONDRIAL"/>
    <property type="match status" value="1"/>
</dbReference>
<dbReference type="Pfam" id="PF13489">
    <property type="entry name" value="Methyltransf_23"/>
    <property type="match status" value="1"/>
</dbReference>
<dbReference type="SUPFAM" id="SSF53335">
    <property type="entry name" value="S-adenosyl-L-methionine-dependent methyltransferases"/>
    <property type="match status" value="1"/>
</dbReference>
<gene>
    <name evidence="1" type="primary">ubiG</name>
    <name type="ordered locus">RPD_0100</name>
</gene>
<organism>
    <name type="scientific">Rhodopseudomonas palustris (strain BisB5)</name>
    <dbReference type="NCBI Taxonomy" id="316057"/>
    <lineage>
        <taxon>Bacteria</taxon>
        <taxon>Pseudomonadati</taxon>
        <taxon>Pseudomonadota</taxon>
        <taxon>Alphaproteobacteria</taxon>
        <taxon>Hyphomicrobiales</taxon>
        <taxon>Nitrobacteraceae</taxon>
        <taxon>Rhodopseudomonas</taxon>
    </lineage>
</organism>
<proteinExistence type="inferred from homology"/>
<sequence>MALQSESTGPVSPSVDPAEIAKFSRLSAEWWDPTGKMAPLHRINPLRISFIRDAACRKFERNAKSLSCLSGLRMLDIGCGAGLLCEPFTRLGAQVIGIDPSATNIAAAKLHADKSHLAIDYRCTTVEEIDPRERFDIVMAMEVIEHVNDVPAFLGRCAALMKPTGIMLVATLNRNWKSFALAIVGAEYVMRWLPRGTHQWDKFVTPDELEQHLQGLGLVVTEQSGLVFNPLADRWRLSPDMDVNYMVVAETAP</sequence>